<reference key="1">
    <citation type="journal article" date="2002" name="Lancet">
        <title>Genome and virulence determinants of high virulence community-acquired MRSA.</title>
        <authorList>
            <person name="Baba T."/>
            <person name="Takeuchi F."/>
            <person name="Kuroda M."/>
            <person name="Yuzawa H."/>
            <person name="Aoki K."/>
            <person name="Oguchi A."/>
            <person name="Nagai Y."/>
            <person name="Iwama N."/>
            <person name="Asano K."/>
            <person name="Naimi T."/>
            <person name="Kuroda H."/>
            <person name="Cui L."/>
            <person name="Yamamoto K."/>
            <person name="Hiramatsu K."/>
        </authorList>
    </citation>
    <scope>NUCLEOTIDE SEQUENCE [LARGE SCALE GENOMIC DNA]</scope>
    <source>
        <strain>MW2</strain>
    </source>
</reference>
<keyword id="KW-0050">Antiport</keyword>
<keyword id="KW-1003">Cell membrane</keyword>
<keyword id="KW-0406">Ion transport</keyword>
<keyword id="KW-0472">Membrane</keyword>
<keyword id="KW-0812">Transmembrane</keyword>
<keyword id="KW-1133">Transmembrane helix</keyword>
<keyword id="KW-0813">Transport</keyword>
<proteinExistence type="inferred from homology"/>
<sequence length="160" mass="18851">MNQIVLNIIIAFLWVLFQDEDHFKFSTFFSGYLIGLIVIYILHRFFSDDFYVRKIWVAIKFLGVYLYQLITSSISTINYILFKTKDMNPGLLSYETRLTSDWSITFLTILIIITPGSTVIRISQDSKKFFIHSIDVSEKEKDSLLRSIKHYEDLILEVSR</sequence>
<comment type="subunit">
    <text evidence="1">May form a heterooligomeric complex that consists of seven subunits: mnhA2, mnhB2, mnhC2, mnhD2, mnhE2, mnhF2 and mnhG2.</text>
</comment>
<comment type="subcellular location">
    <subcellularLocation>
        <location evidence="3">Cell membrane</location>
        <topology evidence="3">Multi-pass membrane protein</topology>
    </subcellularLocation>
</comment>
<comment type="similarity">
    <text evidence="3">Belongs to the CPA3 antiporters (TC 2.A.63) subunit E family.</text>
</comment>
<name>MNHE2_STAAW</name>
<accession>Q8NXT0</accession>
<evidence type="ECO:0000250" key="1"/>
<evidence type="ECO:0000255" key="2"/>
<evidence type="ECO:0000305" key="3"/>
<gene>
    <name type="primary">mnhE2</name>
    <name type="synonym">mrpE2</name>
    <name type="ordered locus">MW0589</name>
</gene>
<protein>
    <recommendedName>
        <fullName>Putative antiporter subunit mnhE2</fullName>
    </recommendedName>
    <alternativeName>
        <fullName>Mrp complex subunit E2</fullName>
    </alternativeName>
    <alternativeName>
        <fullName>Putative NADH-ubiquinone oxidoreductase subunit mnhE2</fullName>
    </alternativeName>
</protein>
<dbReference type="EMBL" id="BA000033">
    <property type="protein sequence ID" value="BAB94454.1"/>
    <property type="molecule type" value="Genomic_DNA"/>
</dbReference>
<dbReference type="RefSeq" id="WP_001071973.1">
    <property type="nucleotide sequence ID" value="NC_003923.1"/>
</dbReference>
<dbReference type="SMR" id="Q8NXT0"/>
<dbReference type="KEGG" id="sam:MW0589"/>
<dbReference type="HOGENOM" id="CLU_086615_3_2_9"/>
<dbReference type="GO" id="GO:0005886">
    <property type="term" value="C:plasma membrane"/>
    <property type="evidence" value="ECO:0007669"/>
    <property type="project" value="UniProtKB-SubCell"/>
</dbReference>
<dbReference type="GO" id="GO:0015297">
    <property type="term" value="F:antiporter activity"/>
    <property type="evidence" value="ECO:0007669"/>
    <property type="project" value="UniProtKB-KW"/>
</dbReference>
<dbReference type="GO" id="GO:0008324">
    <property type="term" value="F:monoatomic cation transmembrane transporter activity"/>
    <property type="evidence" value="ECO:0007669"/>
    <property type="project" value="InterPro"/>
</dbReference>
<dbReference type="InterPro" id="IPR002758">
    <property type="entry name" value="Cation_antiport_E"/>
</dbReference>
<dbReference type="NCBIfam" id="NF006517">
    <property type="entry name" value="PRK08965.1-1"/>
    <property type="match status" value="1"/>
</dbReference>
<dbReference type="PANTHER" id="PTHR34584">
    <property type="entry name" value="NA(+)/H(+) ANTIPORTER SUBUNIT E1"/>
    <property type="match status" value="1"/>
</dbReference>
<dbReference type="PANTHER" id="PTHR34584:SF1">
    <property type="entry name" value="NA(+)_H(+) ANTIPORTER SUBUNIT E1"/>
    <property type="match status" value="1"/>
</dbReference>
<dbReference type="Pfam" id="PF01899">
    <property type="entry name" value="MNHE"/>
    <property type="match status" value="1"/>
</dbReference>
<dbReference type="PIRSF" id="PIRSF019239">
    <property type="entry name" value="MrpE"/>
    <property type="match status" value="1"/>
</dbReference>
<organism>
    <name type="scientific">Staphylococcus aureus (strain MW2)</name>
    <dbReference type="NCBI Taxonomy" id="196620"/>
    <lineage>
        <taxon>Bacteria</taxon>
        <taxon>Bacillati</taxon>
        <taxon>Bacillota</taxon>
        <taxon>Bacilli</taxon>
        <taxon>Bacillales</taxon>
        <taxon>Staphylococcaceae</taxon>
        <taxon>Staphylococcus</taxon>
    </lineage>
</organism>
<feature type="chain" id="PRO_0000372218" description="Putative antiporter subunit mnhE2">
    <location>
        <begin position="1"/>
        <end position="160"/>
    </location>
</feature>
<feature type="transmembrane region" description="Helical" evidence="2">
    <location>
        <begin position="22"/>
        <end position="42"/>
    </location>
</feature>
<feature type="transmembrane region" description="Helical" evidence="2">
    <location>
        <begin position="55"/>
        <end position="75"/>
    </location>
</feature>
<feature type="transmembrane region" description="Helical" evidence="2">
    <location>
        <begin position="100"/>
        <end position="120"/>
    </location>
</feature>